<comment type="function">
    <text evidence="1">Catalyzes the reversible interconversion of serine and glycine with tetrahydrofolate (THF) serving as the one-carbon carrier. This reaction serves as the major source of one-carbon groups required for the biosynthesis of purines, thymidylate, methionine, and other important biomolecules. Also exhibits THF-independent aldolase activity toward beta-hydroxyamino acids, producing glycine and aldehydes, via a retro-aldol mechanism.</text>
</comment>
<comment type="catalytic activity">
    <reaction evidence="1">
        <text>(6R)-5,10-methylene-5,6,7,8-tetrahydrofolate + glycine + H2O = (6S)-5,6,7,8-tetrahydrofolate + L-serine</text>
        <dbReference type="Rhea" id="RHEA:15481"/>
        <dbReference type="ChEBI" id="CHEBI:15377"/>
        <dbReference type="ChEBI" id="CHEBI:15636"/>
        <dbReference type="ChEBI" id="CHEBI:33384"/>
        <dbReference type="ChEBI" id="CHEBI:57305"/>
        <dbReference type="ChEBI" id="CHEBI:57453"/>
        <dbReference type="EC" id="2.1.2.1"/>
    </reaction>
</comment>
<comment type="cofactor">
    <cofactor evidence="1">
        <name>pyridoxal 5'-phosphate</name>
        <dbReference type="ChEBI" id="CHEBI:597326"/>
    </cofactor>
</comment>
<comment type="pathway">
    <text evidence="1">One-carbon metabolism; tetrahydrofolate interconversion.</text>
</comment>
<comment type="pathway">
    <text evidence="1">Amino-acid biosynthesis; glycine biosynthesis; glycine from L-serine: step 1/1.</text>
</comment>
<comment type="subunit">
    <text evidence="1">Homodimer.</text>
</comment>
<comment type="subcellular location">
    <subcellularLocation>
        <location evidence="1">Cytoplasm</location>
    </subcellularLocation>
</comment>
<comment type="similarity">
    <text evidence="1">Belongs to the SHMT family.</text>
</comment>
<protein>
    <recommendedName>
        <fullName evidence="1">Serine hydroxymethyltransferase</fullName>
        <shortName evidence="1">SHMT</shortName>
        <shortName evidence="1">Serine methylase</shortName>
        <ecNumber evidence="1">2.1.2.1</ecNumber>
    </recommendedName>
</protein>
<gene>
    <name evidence="1" type="primary">glyA</name>
    <name type="ordered locus">ABO_2176</name>
</gene>
<proteinExistence type="inferred from homology"/>
<keyword id="KW-0028">Amino-acid biosynthesis</keyword>
<keyword id="KW-0963">Cytoplasm</keyword>
<keyword id="KW-0554">One-carbon metabolism</keyword>
<keyword id="KW-0663">Pyridoxal phosphate</keyword>
<keyword id="KW-1185">Reference proteome</keyword>
<keyword id="KW-0808">Transferase</keyword>
<organism>
    <name type="scientific">Alcanivorax borkumensis (strain ATCC 700651 / DSM 11573 / NCIMB 13689 / SK2)</name>
    <dbReference type="NCBI Taxonomy" id="393595"/>
    <lineage>
        <taxon>Bacteria</taxon>
        <taxon>Pseudomonadati</taxon>
        <taxon>Pseudomonadota</taxon>
        <taxon>Gammaproteobacteria</taxon>
        <taxon>Oceanospirillales</taxon>
        <taxon>Alcanivoracaceae</taxon>
        <taxon>Alcanivorax</taxon>
    </lineage>
</organism>
<accession>Q0VMH4</accession>
<reference key="1">
    <citation type="journal article" date="2006" name="Nat. Biotechnol.">
        <title>Genome sequence of the ubiquitous hydrocarbon-degrading marine bacterium Alcanivorax borkumensis.</title>
        <authorList>
            <person name="Schneiker S."/>
            <person name="Martins dos Santos V.A.P."/>
            <person name="Bartels D."/>
            <person name="Bekel T."/>
            <person name="Brecht M."/>
            <person name="Buhrmester J."/>
            <person name="Chernikova T.N."/>
            <person name="Denaro R."/>
            <person name="Ferrer M."/>
            <person name="Gertler C."/>
            <person name="Goesmann A."/>
            <person name="Golyshina O.V."/>
            <person name="Kaminski F."/>
            <person name="Khachane A.N."/>
            <person name="Lang S."/>
            <person name="Linke B."/>
            <person name="McHardy A.C."/>
            <person name="Meyer F."/>
            <person name="Nechitaylo T."/>
            <person name="Puehler A."/>
            <person name="Regenhardt D."/>
            <person name="Rupp O."/>
            <person name="Sabirova J.S."/>
            <person name="Selbitschka W."/>
            <person name="Yakimov M.M."/>
            <person name="Timmis K.N."/>
            <person name="Vorhoelter F.-J."/>
            <person name="Weidner S."/>
            <person name="Kaiser O."/>
            <person name="Golyshin P.N."/>
        </authorList>
    </citation>
    <scope>NUCLEOTIDE SEQUENCE [LARGE SCALE GENOMIC DNA]</scope>
    <source>
        <strain>ATCC 700651 / DSM 11573 / NCIMB 13689 / SK2</strain>
    </source>
</reference>
<name>GLYA_ALCBS</name>
<dbReference type="EC" id="2.1.2.1" evidence="1"/>
<dbReference type="EMBL" id="AM286690">
    <property type="protein sequence ID" value="CAL17624.1"/>
    <property type="molecule type" value="Genomic_DNA"/>
</dbReference>
<dbReference type="RefSeq" id="WP_011589454.1">
    <property type="nucleotide sequence ID" value="NC_008260.1"/>
</dbReference>
<dbReference type="SMR" id="Q0VMH4"/>
<dbReference type="STRING" id="393595.ABO_2176"/>
<dbReference type="KEGG" id="abo:ABO_2176"/>
<dbReference type="eggNOG" id="COG0112">
    <property type="taxonomic scope" value="Bacteria"/>
</dbReference>
<dbReference type="HOGENOM" id="CLU_022477_2_1_6"/>
<dbReference type="OrthoDB" id="9803846at2"/>
<dbReference type="UniPathway" id="UPA00193"/>
<dbReference type="UniPathway" id="UPA00288">
    <property type="reaction ID" value="UER01023"/>
</dbReference>
<dbReference type="Proteomes" id="UP000008871">
    <property type="component" value="Chromosome"/>
</dbReference>
<dbReference type="GO" id="GO:0005829">
    <property type="term" value="C:cytosol"/>
    <property type="evidence" value="ECO:0007669"/>
    <property type="project" value="TreeGrafter"/>
</dbReference>
<dbReference type="GO" id="GO:0004372">
    <property type="term" value="F:glycine hydroxymethyltransferase activity"/>
    <property type="evidence" value="ECO:0007669"/>
    <property type="project" value="UniProtKB-UniRule"/>
</dbReference>
<dbReference type="GO" id="GO:0030170">
    <property type="term" value="F:pyridoxal phosphate binding"/>
    <property type="evidence" value="ECO:0007669"/>
    <property type="project" value="UniProtKB-UniRule"/>
</dbReference>
<dbReference type="GO" id="GO:0019264">
    <property type="term" value="P:glycine biosynthetic process from serine"/>
    <property type="evidence" value="ECO:0007669"/>
    <property type="project" value="UniProtKB-UniRule"/>
</dbReference>
<dbReference type="GO" id="GO:0035999">
    <property type="term" value="P:tetrahydrofolate interconversion"/>
    <property type="evidence" value="ECO:0007669"/>
    <property type="project" value="UniProtKB-UniRule"/>
</dbReference>
<dbReference type="CDD" id="cd00378">
    <property type="entry name" value="SHMT"/>
    <property type="match status" value="1"/>
</dbReference>
<dbReference type="FunFam" id="3.40.640.10:FF:000001">
    <property type="entry name" value="Serine hydroxymethyltransferase"/>
    <property type="match status" value="1"/>
</dbReference>
<dbReference type="FunFam" id="3.90.1150.10:FF:000003">
    <property type="entry name" value="Serine hydroxymethyltransferase"/>
    <property type="match status" value="1"/>
</dbReference>
<dbReference type="Gene3D" id="3.90.1150.10">
    <property type="entry name" value="Aspartate Aminotransferase, domain 1"/>
    <property type="match status" value="1"/>
</dbReference>
<dbReference type="Gene3D" id="3.40.640.10">
    <property type="entry name" value="Type I PLP-dependent aspartate aminotransferase-like (Major domain)"/>
    <property type="match status" value="1"/>
</dbReference>
<dbReference type="HAMAP" id="MF_00051">
    <property type="entry name" value="SHMT"/>
    <property type="match status" value="1"/>
</dbReference>
<dbReference type="InterPro" id="IPR015424">
    <property type="entry name" value="PyrdxlP-dep_Trfase"/>
</dbReference>
<dbReference type="InterPro" id="IPR015421">
    <property type="entry name" value="PyrdxlP-dep_Trfase_major"/>
</dbReference>
<dbReference type="InterPro" id="IPR015422">
    <property type="entry name" value="PyrdxlP-dep_Trfase_small"/>
</dbReference>
<dbReference type="InterPro" id="IPR001085">
    <property type="entry name" value="Ser_HO-MeTrfase"/>
</dbReference>
<dbReference type="InterPro" id="IPR049943">
    <property type="entry name" value="Ser_HO-MeTrfase-like"/>
</dbReference>
<dbReference type="InterPro" id="IPR019798">
    <property type="entry name" value="Ser_HO-MeTrfase_PLP_BS"/>
</dbReference>
<dbReference type="InterPro" id="IPR039429">
    <property type="entry name" value="SHMT-like_dom"/>
</dbReference>
<dbReference type="NCBIfam" id="NF000586">
    <property type="entry name" value="PRK00011.1"/>
    <property type="match status" value="1"/>
</dbReference>
<dbReference type="PANTHER" id="PTHR11680">
    <property type="entry name" value="SERINE HYDROXYMETHYLTRANSFERASE"/>
    <property type="match status" value="1"/>
</dbReference>
<dbReference type="PANTHER" id="PTHR11680:SF50">
    <property type="entry name" value="SERINE HYDROXYMETHYLTRANSFERASE"/>
    <property type="match status" value="1"/>
</dbReference>
<dbReference type="Pfam" id="PF00464">
    <property type="entry name" value="SHMT"/>
    <property type="match status" value="1"/>
</dbReference>
<dbReference type="PIRSF" id="PIRSF000412">
    <property type="entry name" value="SHMT"/>
    <property type="match status" value="1"/>
</dbReference>
<dbReference type="SUPFAM" id="SSF53383">
    <property type="entry name" value="PLP-dependent transferases"/>
    <property type="match status" value="1"/>
</dbReference>
<dbReference type="PROSITE" id="PS00096">
    <property type="entry name" value="SHMT"/>
    <property type="match status" value="1"/>
</dbReference>
<feature type="chain" id="PRO_1000006215" description="Serine hydroxymethyltransferase">
    <location>
        <begin position="1"/>
        <end position="418"/>
    </location>
</feature>
<feature type="binding site" evidence="1">
    <location>
        <position position="121"/>
    </location>
    <ligand>
        <name>(6S)-5,6,7,8-tetrahydrofolate</name>
        <dbReference type="ChEBI" id="CHEBI:57453"/>
    </ligand>
</feature>
<feature type="binding site" evidence="1">
    <location>
        <begin position="125"/>
        <end position="127"/>
    </location>
    <ligand>
        <name>(6S)-5,6,7,8-tetrahydrofolate</name>
        <dbReference type="ChEBI" id="CHEBI:57453"/>
    </ligand>
</feature>
<feature type="binding site" evidence="1">
    <location>
        <begin position="355"/>
        <end position="357"/>
    </location>
    <ligand>
        <name>(6S)-5,6,7,8-tetrahydrofolate</name>
        <dbReference type="ChEBI" id="CHEBI:57453"/>
    </ligand>
</feature>
<feature type="site" description="Plays an important role in substrate specificity" evidence="1">
    <location>
        <position position="229"/>
    </location>
</feature>
<feature type="modified residue" description="N6-(pyridoxal phosphate)lysine" evidence="1">
    <location>
        <position position="230"/>
    </location>
</feature>
<evidence type="ECO:0000255" key="1">
    <source>
        <dbReference type="HAMAP-Rule" id="MF_00051"/>
    </source>
</evidence>
<sequence length="418" mass="44941">MFPKSMSIAEFDPEIKAAIEAEEVRQEEHIELIASENYASPRVMEAQGSVLTNKYAEGYPGKRYYGGCENVDVVEQLAIDRACELFGADWANVQPHSGSQANGAVYMAMLKAGDTVLGMSLDAGGHLTHGAKPNFSGKTYNAVQYGLDNETGLIDYDQVASLAREHKPKMIVAGFSAYSQIVDWQRFRDIADEVGAILLVDMAHVAGLVAAGVYPSPVGIADITTTTTHKTLGGPRGGLIMGKASEEIQKKINSAVFPGGQGGPLEHVIAAKAICFKEAMQDDFKGYQQQVVKNAQAMAGVFIERGFDVVSNGTENHLFLLSLIKQDITGKDADAALGRANITVNKNAVPNDPRSPFVTSGLRIGSPSITRRGFDEADAKALAGWICDILENMGDEGVIEQVKGKVKEICARLPVYER</sequence>